<organism>
    <name type="scientific">Schizophyllum commune</name>
    <name type="common">Split gill fungus</name>
    <dbReference type="NCBI Taxonomy" id="5334"/>
    <lineage>
        <taxon>Eukaryota</taxon>
        <taxon>Fungi</taxon>
        <taxon>Dikarya</taxon>
        <taxon>Basidiomycota</taxon>
        <taxon>Agaricomycotina</taxon>
        <taxon>Agaricomycetes</taxon>
        <taxon>Agaricomycetidae</taxon>
        <taxon>Agaricales</taxon>
        <taxon>Schizophyllaceae</taxon>
        <taxon>Schizophyllum</taxon>
    </lineage>
</organism>
<reference key="1">
    <citation type="journal article" date="1997" name="Genetics">
        <title>Multiple genes encoding pheromones and a pheromone receptor define the B beta 1 mating-type specificity in Schizophyllum commune.</title>
        <authorList>
            <person name="Vaillancourt L.J."/>
            <person name="Raudaskoski M."/>
            <person name="Specht C.A."/>
            <person name="Raper C.A."/>
        </authorList>
    </citation>
    <scope>NUCLEOTIDE SEQUENCE [GENOMIC DNA]</scope>
    <source>
        <strain>ATCC 44201 / CBS 340.81 / UVM 4-40 / 4-40</strain>
    </source>
</reference>
<keyword id="KW-1003">Cell membrane</keyword>
<keyword id="KW-0449">Lipoprotein</keyword>
<keyword id="KW-0472">Membrane</keyword>
<keyword id="KW-0488">Methylation</keyword>
<keyword id="KW-0588">Pheromone</keyword>
<keyword id="KW-0636">Prenylation</keyword>
<comment type="function">
    <text>Activates B-regulated development.</text>
</comment>
<comment type="subcellular location">
    <subcellularLocation>
        <location evidence="2">Cell membrane</location>
        <topology evidence="2">Lipid-anchor</topology>
        <orientation evidence="2">Cytoplasmic side</orientation>
    </subcellularLocation>
</comment>
<sequence>MDAFTDFSILADGLASLGDESSHTILAEFSPSILDGPFVADSAPLTEAPCNHDQIADYGSYCVVA</sequence>
<name>BB12_SCHCO</name>
<feature type="propeptide" id="PRO_0000020796" evidence="1">
    <location>
        <begin position="1"/>
        <end status="unknown"/>
    </location>
</feature>
<feature type="peptide" id="PRO_0000020797" description="Mating-type pheromone BBP1(2)">
    <location>
        <begin status="unknown"/>
        <end position="62"/>
    </location>
</feature>
<feature type="propeptide" id="PRO_0000020798" description="Removed in mature form" evidence="1">
    <location>
        <begin position="63"/>
        <end position="65"/>
    </location>
</feature>
<feature type="modified residue" description="Cysteine methyl ester" evidence="1">
    <location>
        <position position="62"/>
    </location>
</feature>
<feature type="lipid moiety-binding region" description="S-farnesyl cysteine" evidence="1">
    <location>
        <position position="62"/>
    </location>
</feature>
<accession>P78743</accession>
<dbReference type="EMBL" id="U74495">
    <property type="protein sequence ID" value="AAB41860.1"/>
    <property type="molecule type" value="Genomic_DNA"/>
</dbReference>
<dbReference type="GO" id="GO:0005886">
    <property type="term" value="C:plasma membrane"/>
    <property type="evidence" value="ECO:0007669"/>
    <property type="project" value="UniProtKB-SubCell"/>
</dbReference>
<dbReference type="GO" id="GO:0000772">
    <property type="term" value="F:mating pheromone activity"/>
    <property type="evidence" value="ECO:0007669"/>
    <property type="project" value="InterPro"/>
</dbReference>
<dbReference type="InterPro" id="IPR012597">
    <property type="entry name" value="Pheromone"/>
</dbReference>
<dbReference type="Pfam" id="PF08015">
    <property type="entry name" value="Pheromone"/>
    <property type="match status" value="1"/>
</dbReference>
<gene>
    <name type="primary">BBP1(2)</name>
</gene>
<proteinExistence type="inferred from homology"/>
<evidence type="ECO:0000255" key="1"/>
<evidence type="ECO:0000305" key="2"/>
<protein>
    <recommendedName>
        <fullName>Mating-type pheromone BBP1(2)</fullName>
    </recommendedName>
</protein>